<feature type="chain" id="PRO_1000026194" description="Large ribosomal subunit protein uL16">
    <location>
        <begin position="1"/>
        <end position="182"/>
    </location>
</feature>
<reference key="1">
    <citation type="submission" date="2007-04" db="EMBL/GenBank/DDBJ databases">
        <title>Complete sequence of Pyrobaculum arsenaticum DSM 13514.</title>
        <authorList>
            <consortium name="US DOE Joint Genome Institute"/>
            <person name="Copeland A."/>
            <person name="Lucas S."/>
            <person name="Lapidus A."/>
            <person name="Barry K."/>
            <person name="Glavina del Rio T."/>
            <person name="Dalin E."/>
            <person name="Tice H."/>
            <person name="Pitluck S."/>
            <person name="Chain P."/>
            <person name="Malfatti S."/>
            <person name="Shin M."/>
            <person name="Vergez L."/>
            <person name="Schmutz J."/>
            <person name="Larimer F."/>
            <person name="Land M."/>
            <person name="Hauser L."/>
            <person name="Kyrpides N."/>
            <person name="Mikhailova N."/>
            <person name="Cozen A.E."/>
            <person name="Fitz-Gibbon S.T."/>
            <person name="House C.H."/>
            <person name="Saltikov C."/>
            <person name="Lowe T.M."/>
            <person name="Richardson P."/>
        </authorList>
    </citation>
    <scope>NUCLEOTIDE SEQUENCE [LARGE SCALE GENOMIC DNA]</scope>
    <source>
        <strain>ATCC 700994 / DSM 13514 / JCM 11321 / PZ6</strain>
    </source>
</reference>
<evidence type="ECO:0000255" key="1">
    <source>
        <dbReference type="HAMAP-Rule" id="MF_00448"/>
    </source>
</evidence>
<evidence type="ECO:0000305" key="2"/>
<accession>A4WN05</accession>
<organism>
    <name type="scientific">Pyrobaculum arsenaticum (strain DSM 13514 / JCM 11321 / PZ6)</name>
    <dbReference type="NCBI Taxonomy" id="340102"/>
    <lineage>
        <taxon>Archaea</taxon>
        <taxon>Thermoproteota</taxon>
        <taxon>Thermoprotei</taxon>
        <taxon>Thermoproteales</taxon>
        <taxon>Thermoproteaceae</taxon>
        <taxon>Pyrobaculum</taxon>
    </lineage>
</organism>
<name>RL10E_PYRAR</name>
<dbReference type="EMBL" id="CP000660">
    <property type="protein sequence ID" value="ABP51772.1"/>
    <property type="molecule type" value="Genomic_DNA"/>
</dbReference>
<dbReference type="SMR" id="A4WN05"/>
<dbReference type="STRING" id="340102.Pars_2226"/>
<dbReference type="KEGG" id="pas:Pars_2226"/>
<dbReference type="HOGENOM" id="CLU_084051_0_2_2"/>
<dbReference type="OrthoDB" id="30538at2157"/>
<dbReference type="PhylomeDB" id="A4WN05"/>
<dbReference type="Proteomes" id="UP000001567">
    <property type="component" value="Chromosome"/>
</dbReference>
<dbReference type="GO" id="GO:1990904">
    <property type="term" value="C:ribonucleoprotein complex"/>
    <property type="evidence" value="ECO:0007669"/>
    <property type="project" value="UniProtKB-KW"/>
</dbReference>
<dbReference type="GO" id="GO:0005840">
    <property type="term" value="C:ribosome"/>
    <property type="evidence" value="ECO:0007669"/>
    <property type="project" value="UniProtKB-KW"/>
</dbReference>
<dbReference type="GO" id="GO:0003735">
    <property type="term" value="F:structural constituent of ribosome"/>
    <property type="evidence" value="ECO:0007669"/>
    <property type="project" value="InterPro"/>
</dbReference>
<dbReference type="GO" id="GO:0006412">
    <property type="term" value="P:translation"/>
    <property type="evidence" value="ECO:0007669"/>
    <property type="project" value="UniProtKB-UniRule"/>
</dbReference>
<dbReference type="CDD" id="cd01433">
    <property type="entry name" value="Ribosomal_L16_L10e"/>
    <property type="match status" value="1"/>
</dbReference>
<dbReference type="FunFam" id="3.90.1170.10:FF:000008">
    <property type="entry name" value="50S ribosomal protein L10e"/>
    <property type="match status" value="1"/>
</dbReference>
<dbReference type="Gene3D" id="3.90.1170.10">
    <property type="entry name" value="Ribosomal protein L10e/L16"/>
    <property type="match status" value="1"/>
</dbReference>
<dbReference type="HAMAP" id="MF_00448">
    <property type="entry name" value="Ribosomal_uL16_arch"/>
    <property type="match status" value="1"/>
</dbReference>
<dbReference type="InterPro" id="IPR047873">
    <property type="entry name" value="Ribosomal_uL16"/>
</dbReference>
<dbReference type="InterPro" id="IPR022981">
    <property type="entry name" value="Ribosomal_uL16_arc"/>
</dbReference>
<dbReference type="InterPro" id="IPR018255">
    <property type="entry name" value="Ribosomal_uL16_CS_euk_arc"/>
</dbReference>
<dbReference type="InterPro" id="IPR016180">
    <property type="entry name" value="Ribosomal_uL16_dom"/>
</dbReference>
<dbReference type="InterPro" id="IPR001197">
    <property type="entry name" value="Ribosomal_uL16_euk_arch"/>
</dbReference>
<dbReference type="InterPro" id="IPR036920">
    <property type="entry name" value="Ribosomal_uL16_sf"/>
</dbReference>
<dbReference type="NCBIfam" id="NF003236">
    <property type="entry name" value="PRK04199.1-1"/>
    <property type="match status" value="1"/>
</dbReference>
<dbReference type="NCBIfam" id="NF003239">
    <property type="entry name" value="PRK04199.1-4"/>
    <property type="match status" value="1"/>
</dbReference>
<dbReference type="PANTHER" id="PTHR11726">
    <property type="entry name" value="60S RIBOSOMAL PROTEIN L10"/>
    <property type="match status" value="1"/>
</dbReference>
<dbReference type="Pfam" id="PF00252">
    <property type="entry name" value="Ribosomal_L16"/>
    <property type="match status" value="1"/>
</dbReference>
<dbReference type="PIRSF" id="PIRSF005590">
    <property type="entry name" value="Ribosomal_L10"/>
    <property type="match status" value="1"/>
</dbReference>
<dbReference type="SUPFAM" id="SSF54686">
    <property type="entry name" value="Ribosomal protein L16p/L10e"/>
    <property type="match status" value="1"/>
</dbReference>
<dbReference type="PROSITE" id="PS01257">
    <property type="entry name" value="RIBOSOMAL_L10E"/>
    <property type="match status" value="1"/>
</dbReference>
<keyword id="KW-0687">Ribonucleoprotein</keyword>
<keyword id="KW-0689">Ribosomal protein</keyword>
<proteinExistence type="inferred from homology"/>
<comment type="similarity">
    <text evidence="1">Belongs to the universal ribosomal protein uL16 family.</text>
</comment>
<protein>
    <recommendedName>
        <fullName evidence="1">Large ribosomal subunit protein uL16</fullName>
    </recommendedName>
    <alternativeName>
        <fullName evidence="2">50S ribosomal protein L10e</fullName>
    </alternativeName>
</protein>
<gene>
    <name evidence="1" type="primary">rpl10e</name>
    <name type="ordered locus">Pars_2226</name>
</gene>
<sequence length="182" mass="20391">MPVRPARCYRRIKGPPYTREEYIHGAPMIQIPKFDMGTTSAAARATFPMVAKLIVEERGQIRMQALEAARQMASKYLTKYVGDANYYLRLNVIPHHVLRENRMLAMAGADRLQEGMRLAFGSPAGRAARVEPGQILFYAEFKPEHLAHIKEAFRRAASKLPLPTRIVIEPKGDGDGKTATQG</sequence>